<evidence type="ECO:0000255" key="1">
    <source>
        <dbReference type="PROSITE-ProRule" id="PRU00175"/>
    </source>
</evidence>
<evidence type="ECO:0000255" key="2">
    <source>
        <dbReference type="PROSITE-ProRule" id="PRU01123"/>
    </source>
</evidence>
<evidence type="ECO:0000256" key="3">
    <source>
        <dbReference type="SAM" id="MobiDB-lite"/>
    </source>
</evidence>
<evidence type="ECO:0000269" key="4">
    <source>
    </source>
</evidence>
<evidence type="ECO:0000303" key="5">
    <source>
    </source>
</evidence>
<evidence type="ECO:0000303" key="6">
    <source>
    </source>
</evidence>
<evidence type="ECO:0000305" key="7"/>
<accession>Q496Y0</accession>
<accession>Q5JPN6</accession>
<accession>Q8NB00</accession>
<accession>Q9H647</accession>
<proteinExistence type="evidence at protein level"/>
<organism>
    <name type="scientific">Homo sapiens</name>
    <name type="common">Human</name>
    <dbReference type="NCBI Taxonomy" id="9606"/>
    <lineage>
        <taxon>Eukaryota</taxon>
        <taxon>Metazoa</taxon>
        <taxon>Chordata</taxon>
        <taxon>Craniata</taxon>
        <taxon>Vertebrata</taxon>
        <taxon>Euteleostomi</taxon>
        <taxon>Mammalia</taxon>
        <taxon>Eutheria</taxon>
        <taxon>Euarchontoglires</taxon>
        <taxon>Primates</taxon>
        <taxon>Haplorrhini</taxon>
        <taxon>Catarrhini</taxon>
        <taxon>Hominidae</taxon>
        <taxon>Homo</taxon>
    </lineage>
</organism>
<dbReference type="EMBL" id="AK026265">
    <property type="protein sequence ID" value="BAB15419.1"/>
    <property type="status" value="ALT_INIT"/>
    <property type="molecule type" value="mRNA"/>
</dbReference>
<dbReference type="EMBL" id="AK091777">
    <property type="protein sequence ID" value="BAC03744.1"/>
    <property type="molecule type" value="mRNA"/>
</dbReference>
<dbReference type="EMBL" id="AL772284">
    <property type="status" value="NOT_ANNOTATED_CDS"/>
    <property type="molecule type" value="Genomic_DNA"/>
</dbReference>
<dbReference type="EMBL" id="BC099847">
    <property type="protein sequence ID" value="AAH99847.1"/>
    <property type="molecule type" value="mRNA"/>
</dbReference>
<dbReference type="EMBL" id="BC100671">
    <property type="protein sequence ID" value="AAI00672.1"/>
    <property type="molecule type" value="mRNA"/>
</dbReference>
<dbReference type="EMBL" id="BC103491">
    <property type="protein sequence ID" value="AAI03492.1"/>
    <property type="molecule type" value="mRNA"/>
</dbReference>
<dbReference type="CCDS" id="CCDS14575.1">
    <molecule id="Q496Y0-2"/>
</dbReference>
<dbReference type="CCDS" id="CCDS35374.1">
    <molecule id="Q496Y0-1"/>
</dbReference>
<dbReference type="RefSeq" id="NP_001027026.1">
    <molecule id="Q496Y0-1"/>
    <property type="nucleotide sequence ID" value="NM_001031855.3"/>
</dbReference>
<dbReference type="RefSeq" id="NP_079054.3">
    <molecule id="Q496Y0-2"/>
    <property type="nucleotide sequence ID" value="NM_024778.5"/>
</dbReference>
<dbReference type="SMR" id="Q496Y0"/>
<dbReference type="BioGRID" id="122927">
    <property type="interactions" value="19"/>
</dbReference>
<dbReference type="FunCoup" id="Q496Y0">
    <property type="interactions" value="160"/>
</dbReference>
<dbReference type="IntAct" id="Q496Y0">
    <property type="interactions" value="14"/>
</dbReference>
<dbReference type="STRING" id="9606.ENSP00000360690"/>
<dbReference type="iPTMnet" id="Q496Y0"/>
<dbReference type="PhosphoSitePlus" id="Q496Y0"/>
<dbReference type="BioMuta" id="LONRF3"/>
<dbReference type="DMDM" id="121949074"/>
<dbReference type="jPOST" id="Q496Y0"/>
<dbReference type="MassIVE" id="Q496Y0"/>
<dbReference type="PaxDb" id="9606-ENSP00000360690"/>
<dbReference type="PeptideAtlas" id="Q496Y0"/>
<dbReference type="ProteomicsDB" id="62000">
    <molecule id="Q496Y0-1"/>
</dbReference>
<dbReference type="ProteomicsDB" id="62001">
    <molecule id="Q496Y0-2"/>
</dbReference>
<dbReference type="ProteomicsDB" id="62002">
    <molecule id="Q496Y0-3"/>
</dbReference>
<dbReference type="Antibodypedia" id="29740">
    <property type="antibodies" value="136 antibodies from 21 providers"/>
</dbReference>
<dbReference type="DNASU" id="79836"/>
<dbReference type="Ensembl" id="ENST00000304778.11">
    <molecule id="Q496Y0-2"/>
    <property type="protein sequence ID" value="ENSP00000307732.7"/>
    <property type="gene ID" value="ENSG00000175556.18"/>
</dbReference>
<dbReference type="Ensembl" id="ENST00000371628.8">
    <molecule id="Q496Y0-1"/>
    <property type="protein sequence ID" value="ENSP00000360690.3"/>
    <property type="gene ID" value="ENSG00000175556.18"/>
</dbReference>
<dbReference type="Ensembl" id="ENST00000481285.5">
    <molecule id="Q496Y0-3"/>
    <property type="protein sequence ID" value="ENSP00000435426.1"/>
    <property type="gene ID" value="ENSG00000175556.18"/>
</dbReference>
<dbReference type="GeneID" id="79836"/>
<dbReference type="KEGG" id="hsa:79836"/>
<dbReference type="MANE-Select" id="ENST00000371628.8">
    <property type="protein sequence ID" value="ENSP00000360690.3"/>
    <property type="RefSeq nucleotide sequence ID" value="NM_001031855.3"/>
    <property type="RefSeq protein sequence ID" value="NP_001027026.1"/>
</dbReference>
<dbReference type="UCSC" id="uc004eqw.5">
    <molecule id="Q496Y0-1"/>
    <property type="organism name" value="human"/>
</dbReference>
<dbReference type="AGR" id="HGNC:21152"/>
<dbReference type="CTD" id="79836"/>
<dbReference type="GeneCards" id="LONRF3"/>
<dbReference type="HGNC" id="HGNC:21152">
    <property type="gene designation" value="LONRF3"/>
</dbReference>
<dbReference type="HPA" id="ENSG00000175556">
    <property type="expression patterns" value="Tissue enhanced (liver)"/>
</dbReference>
<dbReference type="neXtProt" id="NX_Q496Y0"/>
<dbReference type="OpenTargets" id="ENSG00000175556"/>
<dbReference type="PharmGKB" id="PA134900980"/>
<dbReference type="VEuPathDB" id="HostDB:ENSG00000175556"/>
<dbReference type="eggNOG" id="KOG1124">
    <property type="taxonomic scope" value="Eukaryota"/>
</dbReference>
<dbReference type="eggNOG" id="KOG4159">
    <property type="taxonomic scope" value="Eukaryota"/>
</dbReference>
<dbReference type="GeneTree" id="ENSGT00440000033329"/>
<dbReference type="InParanoid" id="Q496Y0"/>
<dbReference type="OMA" id="RLMPHWS"/>
<dbReference type="OrthoDB" id="264917at2759"/>
<dbReference type="PAN-GO" id="Q496Y0">
    <property type="GO annotations" value="1 GO annotation based on evolutionary models"/>
</dbReference>
<dbReference type="PhylomeDB" id="Q496Y0"/>
<dbReference type="TreeFam" id="TF327043"/>
<dbReference type="PathwayCommons" id="Q496Y0"/>
<dbReference type="SignaLink" id="Q496Y0"/>
<dbReference type="SIGNOR" id="Q496Y0"/>
<dbReference type="BioGRID-ORCS" id="79836">
    <property type="hits" value="16 hits in 813 CRISPR screens"/>
</dbReference>
<dbReference type="GenomeRNAi" id="79836"/>
<dbReference type="Pharos" id="Q496Y0">
    <property type="development level" value="Tdark"/>
</dbReference>
<dbReference type="PRO" id="PR:Q496Y0"/>
<dbReference type="Proteomes" id="UP000005640">
    <property type="component" value="Chromosome X"/>
</dbReference>
<dbReference type="RNAct" id="Q496Y0">
    <property type="molecule type" value="protein"/>
</dbReference>
<dbReference type="Bgee" id="ENSG00000175556">
    <property type="expression patterns" value="Expressed in gastrocnemius and 108 other cell types or tissues"/>
</dbReference>
<dbReference type="ExpressionAtlas" id="Q496Y0">
    <property type="expression patterns" value="baseline and differential"/>
</dbReference>
<dbReference type="GO" id="GO:0005737">
    <property type="term" value="C:cytoplasm"/>
    <property type="evidence" value="ECO:0007669"/>
    <property type="project" value="UniProtKB-ARBA"/>
</dbReference>
<dbReference type="GO" id="GO:0008270">
    <property type="term" value="F:zinc ion binding"/>
    <property type="evidence" value="ECO:0007669"/>
    <property type="project" value="UniProtKB-KW"/>
</dbReference>
<dbReference type="CDD" id="cd16513">
    <property type="entry name" value="RING-HC_LONFs_rpt1"/>
    <property type="match status" value="1"/>
</dbReference>
<dbReference type="CDD" id="cd16514">
    <property type="entry name" value="RING-HC_LONFs_rpt2"/>
    <property type="match status" value="1"/>
</dbReference>
<dbReference type="Gene3D" id="2.30.130.40">
    <property type="entry name" value="LON domain-like"/>
    <property type="match status" value="1"/>
</dbReference>
<dbReference type="Gene3D" id="1.25.40.10">
    <property type="entry name" value="Tetratricopeptide repeat domain"/>
    <property type="match status" value="1"/>
</dbReference>
<dbReference type="Gene3D" id="3.30.40.10">
    <property type="entry name" value="Zinc/RING finger domain, C3HC4 (zinc finger)"/>
    <property type="match status" value="2"/>
</dbReference>
<dbReference type="InterPro" id="IPR003111">
    <property type="entry name" value="Lon_prtase_N"/>
</dbReference>
<dbReference type="InterPro" id="IPR046336">
    <property type="entry name" value="Lon_prtase_N_sf"/>
</dbReference>
<dbReference type="InterPro" id="IPR015947">
    <property type="entry name" value="PUA-like_sf"/>
</dbReference>
<dbReference type="InterPro" id="IPR011990">
    <property type="entry name" value="TPR-like_helical_dom_sf"/>
</dbReference>
<dbReference type="InterPro" id="IPR019734">
    <property type="entry name" value="TPR_rpt"/>
</dbReference>
<dbReference type="InterPro" id="IPR018957">
    <property type="entry name" value="Znf_C3HC4_RING-type"/>
</dbReference>
<dbReference type="InterPro" id="IPR001841">
    <property type="entry name" value="Znf_RING"/>
</dbReference>
<dbReference type="InterPro" id="IPR013083">
    <property type="entry name" value="Znf_RING/FYVE/PHD"/>
</dbReference>
<dbReference type="InterPro" id="IPR017907">
    <property type="entry name" value="Znf_RING_CS"/>
</dbReference>
<dbReference type="PANTHER" id="PTHR23327:SF41">
    <property type="entry name" value="LON PEPTIDASE N-TERMINAL DOMAIN AND RING FINGER PROTEIN 3"/>
    <property type="match status" value="1"/>
</dbReference>
<dbReference type="PANTHER" id="PTHR23327">
    <property type="entry name" value="RING FINGER PROTEIN 127"/>
    <property type="match status" value="1"/>
</dbReference>
<dbReference type="Pfam" id="PF02190">
    <property type="entry name" value="LON_substr_bdg"/>
    <property type="match status" value="1"/>
</dbReference>
<dbReference type="Pfam" id="PF00097">
    <property type="entry name" value="zf-C3HC4"/>
    <property type="match status" value="1"/>
</dbReference>
<dbReference type="Pfam" id="PF13923">
    <property type="entry name" value="zf-C3HC4_2"/>
    <property type="match status" value="1"/>
</dbReference>
<dbReference type="SMART" id="SM00464">
    <property type="entry name" value="LON"/>
    <property type="match status" value="1"/>
</dbReference>
<dbReference type="SMART" id="SM00184">
    <property type="entry name" value="RING"/>
    <property type="match status" value="2"/>
</dbReference>
<dbReference type="SMART" id="SM00028">
    <property type="entry name" value="TPR"/>
    <property type="match status" value="4"/>
</dbReference>
<dbReference type="SUPFAM" id="SSF88697">
    <property type="entry name" value="PUA domain-like"/>
    <property type="match status" value="1"/>
</dbReference>
<dbReference type="SUPFAM" id="SSF57850">
    <property type="entry name" value="RING/U-box"/>
    <property type="match status" value="2"/>
</dbReference>
<dbReference type="SUPFAM" id="SSF48452">
    <property type="entry name" value="TPR-like"/>
    <property type="match status" value="1"/>
</dbReference>
<dbReference type="PROSITE" id="PS51787">
    <property type="entry name" value="LON_N"/>
    <property type="match status" value="1"/>
</dbReference>
<dbReference type="PROSITE" id="PS50005">
    <property type="entry name" value="TPR"/>
    <property type="match status" value="3"/>
</dbReference>
<dbReference type="PROSITE" id="PS50293">
    <property type="entry name" value="TPR_REGION"/>
    <property type="match status" value="1"/>
</dbReference>
<dbReference type="PROSITE" id="PS00518">
    <property type="entry name" value="ZF_RING_1"/>
    <property type="match status" value="2"/>
</dbReference>
<dbReference type="PROSITE" id="PS50089">
    <property type="entry name" value="ZF_RING_2"/>
    <property type="match status" value="2"/>
</dbReference>
<name>LONF3_HUMAN</name>
<gene>
    <name type="primary">LONRF3</name>
    <name type="synonym">RNF127</name>
</gene>
<protein>
    <recommendedName>
        <fullName>LON peptidase N-terminal domain and RING finger protein 3</fullName>
    </recommendedName>
    <alternativeName>
        <fullName>RING finger protein 127</fullName>
    </alternativeName>
</protein>
<reference key="1">
    <citation type="journal article" date="2004" name="Nat. Genet.">
        <title>Complete sequencing and characterization of 21,243 full-length human cDNAs.</title>
        <authorList>
            <person name="Ota T."/>
            <person name="Suzuki Y."/>
            <person name="Nishikawa T."/>
            <person name="Otsuki T."/>
            <person name="Sugiyama T."/>
            <person name="Irie R."/>
            <person name="Wakamatsu A."/>
            <person name="Hayashi K."/>
            <person name="Sato H."/>
            <person name="Nagai K."/>
            <person name="Kimura K."/>
            <person name="Makita H."/>
            <person name="Sekine M."/>
            <person name="Obayashi M."/>
            <person name="Nishi T."/>
            <person name="Shibahara T."/>
            <person name="Tanaka T."/>
            <person name="Ishii S."/>
            <person name="Yamamoto J."/>
            <person name="Saito K."/>
            <person name="Kawai Y."/>
            <person name="Isono Y."/>
            <person name="Nakamura Y."/>
            <person name="Nagahari K."/>
            <person name="Murakami K."/>
            <person name="Yasuda T."/>
            <person name="Iwayanagi T."/>
            <person name="Wagatsuma M."/>
            <person name="Shiratori A."/>
            <person name="Sudo H."/>
            <person name="Hosoiri T."/>
            <person name="Kaku Y."/>
            <person name="Kodaira H."/>
            <person name="Kondo H."/>
            <person name="Sugawara M."/>
            <person name="Takahashi M."/>
            <person name="Kanda K."/>
            <person name="Yokoi T."/>
            <person name="Furuya T."/>
            <person name="Kikkawa E."/>
            <person name="Omura Y."/>
            <person name="Abe K."/>
            <person name="Kamihara K."/>
            <person name="Katsuta N."/>
            <person name="Sato K."/>
            <person name="Tanikawa M."/>
            <person name="Yamazaki M."/>
            <person name="Ninomiya K."/>
            <person name="Ishibashi T."/>
            <person name="Yamashita H."/>
            <person name="Murakawa K."/>
            <person name="Fujimori K."/>
            <person name="Tanai H."/>
            <person name="Kimata M."/>
            <person name="Watanabe M."/>
            <person name="Hiraoka S."/>
            <person name="Chiba Y."/>
            <person name="Ishida S."/>
            <person name="Ono Y."/>
            <person name="Takiguchi S."/>
            <person name="Watanabe S."/>
            <person name="Yosida M."/>
            <person name="Hotuta T."/>
            <person name="Kusano J."/>
            <person name="Kanehori K."/>
            <person name="Takahashi-Fujii A."/>
            <person name="Hara H."/>
            <person name="Tanase T.-O."/>
            <person name="Nomura Y."/>
            <person name="Togiya S."/>
            <person name="Komai F."/>
            <person name="Hara R."/>
            <person name="Takeuchi K."/>
            <person name="Arita M."/>
            <person name="Imose N."/>
            <person name="Musashino K."/>
            <person name="Yuuki H."/>
            <person name="Oshima A."/>
            <person name="Sasaki N."/>
            <person name="Aotsuka S."/>
            <person name="Yoshikawa Y."/>
            <person name="Matsunawa H."/>
            <person name="Ichihara T."/>
            <person name="Shiohata N."/>
            <person name="Sano S."/>
            <person name="Moriya S."/>
            <person name="Momiyama H."/>
            <person name="Satoh N."/>
            <person name="Takami S."/>
            <person name="Terashima Y."/>
            <person name="Suzuki O."/>
            <person name="Nakagawa S."/>
            <person name="Senoh A."/>
            <person name="Mizoguchi H."/>
            <person name="Goto Y."/>
            <person name="Shimizu F."/>
            <person name="Wakebe H."/>
            <person name="Hishigaki H."/>
            <person name="Watanabe T."/>
            <person name="Sugiyama A."/>
            <person name="Takemoto M."/>
            <person name="Kawakami B."/>
            <person name="Yamazaki M."/>
            <person name="Watanabe K."/>
            <person name="Kumagai A."/>
            <person name="Itakura S."/>
            <person name="Fukuzumi Y."/>
            <person name="Fujimori Y."/>
            <person name="Komiyama M."/>
            <person name="Tashiro H."/>
            <person name="Tanigami A."/>
            <person name="Fujiwara T."/>
            <person name="Ono T."/>
            <person name="Yamada K."/>
            <person name="Fujii Y."/>
            <person name="Ozaki K."/>
            <person name="Hirao M."/>
            <person name="Ohmori Y."/>
            <person name="Kawabata A."/>
            <person name="Hikiji T."/>
            <person name="Kobatake N."/>
            <person name="Inagaki H."/>
            <person name="Ikema Y."/>
            <person name="Okamoto S."/>
            <person name="Okitani R."/>
            <person name="Kawakami T."/>
            <person name="Noguchi S."/>
            <person name="Itoh T."/>
            <person name="Shigeta K."/>
            <person name="Senba T."/>
            <person name="Matsumura K."/>
            <person name="Nakajima Y."/>
            <person name="Mizuno T."/>
            <person name="Morinaga M."/>
            <person name="Sasaki M."/>
            <person name="Togashi T."/>
            <person name="Oyama M."/>
            <person name="Hata H."/>
            <person name="Watanabe M."/>
            <person name="Komatsu T."/>
            <person name="Mizushima-Sugano J."/>
            <person name="Satoh T."/>
            <person name="Shirai Y."/>
            <person name="Takahashi Y."/>
            <person name="Nakagawa K."/>
            <person name="Okumura K."/>
            <person name="Nagase T."/>
            <person name="Nomura N."/>
            <person name="Kikuchi H."/>
            <person name="Masuho Y."/>
            <person name="Yamashita R."/>
            <person name="Nakai K."/>
            <person name="Yada T."/>
            <person name="Nakamura Y."/>
            <person name="Ohara O."/>
            <person name="Isogai T."/>
            <person name="Sugano S."/>
        </authorList>
    </citation>
    <scope>NUCLEOTIDE SEQUENCE [LARGE SCALE MRNA] (ISOFORM 3)</scope>
    <scope>NUCLEOTIDE SEQUENCE [LARGE SCALE MRNA] OF 195-759 (ISOFORM 2)</scope>
    <source>
        <tissue>Intestine</tissue>
        <tissue>Lung</tissue>
    </source>
</reference>
<reference key="2">
    <citation type="journal article" date="2005" name="Nature">
        <title>The DNA sequence of the human X chromosome.</title>
        <authorList>
            <person name="Ross M.T."/>
            <person name="Grafham D.V."/>
            <person name="Coffey A.J."/>
            <person name="Scherer S."/>
            <person name="McLay K."/>
            <person name="Muzny D."/>
            <person name="Platzer M."/>
            <person name="Howell G.R."/>
            <person name="Burrows C."/>
            <person name="Bird C.P."/>
            <person name="Frankish A."/>
            <person name="Lovell F.L."/>
            <person name="Howe K.L."/>
            <person name="Ashurst J.L."/>
            <person name="Fulton R.S."/>
            <person name="Sudbrak R."/>
            <person name="Wen G."/>
            <person name="Jones M.C."/>
            <person name="Hurles M.E."/>
            <person name="Andrews T.D."/>
            <person name="Scott C.E."/>
            <person name="Searle S."/>
            <person name="Ramser J."/>
            <person name="Whittaker A."/>
            <person name="Deadman R."/>
            <person name="Carter N.P."/>
            <person name="Hunt S.E."/>
            <person name="Chen R."/>
            <person name="Cree A."/>
            <person name="Gunaratne P."/>
            <person name="Havlak P."/>
            <person name="Hodgson A."/>
            <person name="Metzker M.L."/>
            <person name="Richards S."/>
            <person name="Scott G."/>
            <person name="Steffen D."/>
            <person name="Sodergren E."/>
            <person name="Wheeler D.A."/>
            <person name="Worley K.C."/>
            <person name="Ainscough R."/>
            <person name="Ambrose K.D."/>
            <person name="Ansari-Lari M.A."/>
            <person name="Aradhya S."/>
            <person name="Ashwell R.I."/>
            <person name="Babbage A.K."/>
            <person name="Bagguley C.L."/>
            <person name="Ballabio A."/>
            <person name="Banerjee R."/>
            <person name="Barker G.E."/>
            <person name="Barlow K.F."/>
            <person name="Barrett I.P."/>
            <person name="Bates K.N."/>
            <person name="Beare D.M."/>
            <person name="Beasley H."/>
            <person name="Beasley O."/>
            <person name="Beck A."/>
            <person name="Bethel G."/>
            <person name="Blechschmidt K."/>
            <person name="Brady N."/>
            <person name="Bray-Allen S."/>
            <person name="Bridgeman A.M."/>
            <person name="Brown A.J."/>
            <person name="Brown M.J."/>
            <person name="Bonnin D."/>
            <person name="Bruford E.A."/>
            <person name="Buhay C."/>
            <person name="Burch P."/>
            <person name="Burford D."/>
            <person name="Burgess J."/>
            <person name="Burrill W."/>
            <person name="Burton J."/>
            <person name="Bye J.M."/>
            <person name="Carder C."/>
            <person name="Carrel L."/>
            <person name="Chako J."/>
            <person name="Chapman J.C."/>
            <person name="Chavez D."/>
            <person name="Chen E."/>
            <person name="Chen G."/>
            <person name="Chen Y."/>
            <person name="Chen Z."/>
            <person name="Chinault C."/>
            <person name="Ciccodicola A."/>
            <person name="Clark S.Y."/>
            <person name="Clarke G."/>
            <person name="Clee C.M."/>
            <person name="Clegg S."/>
            <person name="Clerc-Blankenburg K."/>
            <person name="Clifford K."/>
            <person name="Cobley V."/>
            <person name="Cole C.G."/>
            <person name="Conquer J.S."/>
            <person name="Corby N."/>
            <person name="Connor R.E."/>
            <person name="David R."/>
            <person name="Davies J."/>
            <person name="Davis C."/>
            <person name="Davis J."/>
            <person name="Delgado O."/>
            <person name="Deshazo D."/>
            <person name="Dhami P."/>
            <person name="Ding Y."/>
            <person name="Dinh H."/>
            <person name="Dodsworth S."/>
            <person name="Draper H."/>
            <person name="Dugan-Rocha S."/>
            <person name="Dunham A."/>
            <person name="Dunn M."/>
            <person name="Durbin K.J."/>
            <person name="Dutta I."/>
            <person name="Eades T."/>
            <person name="Ellwood M."/>
            <person name="Emery-Cohen A."/>
            <person name="Errington H."/>
            <person name="Evans K.L."/>
            <person name="Faulkner L."/>
            <person name="Francis F."/>
            <person name="Frankland J."/>
            <person name="Fraser A.E."/>
            <person name="Galgoczy P."/>
            <person name="Gilbert J."/>
            <person name="Gill R."/>
            <person name="Gloeckner G."/>
            <person name="Gregory S.G."/>
            <person name="Gribble S."/>
            <person name="Griffiths C."/>
            <person name="Grocock R."/>
            <person name="Gu Y."/>
            <person name="Gwilliam R."/>
            <person name="Hamilton C."/>
            <person name="Hart E.A."/>
            <person name="Hawes A."/>
            <person name="Heath P.D."/>
            <person name="Heitmann K."/>
            <person name="Hennig S."/>
            <person name="Hernandez J."/>
            <person name="Hinzmann B."/>
            <person name="Ho S."/>
            <person name="Hoffs M."/>
            <person name="Howden P.J."/>
            <person name="Huckle E.J."/>
            <person name="Hume J."/>
            <person name="Hunt P.J."/>
            <person name="Hunt A.R."/>
            <person name="Isherwood J."/>
            <person name="Jacob L."/>
            <person name="Johnson D."/>
            <person name="Jones S."/>
            <person name="de Jong P.J."/>
            <person name="Joseph S.S."/>
            <person name="Keenan S."/>
            <person name="Kelly S."/>
            <person name="Kershaw J.K."/>
            <person name="Khan Z."/>
            <person name="Kioschis P."/>
            <person name="Klages S."/>
            <person name="Knights A.J."/>
            <person name="Kosiura A."/>
            <person name="Kovar-Smith C."/>
            <person name="Laird G.K."/>
            <person name="Langford C."/>
            <person name="Lawlor S."/>
            <person name="Leversha M."/>
            <person name="Lewis L."/>
            <person name="Liu W."/>
            <person name="Lloyd C."/>
            <person name="Lloyd D.M."/>
            <person name="Loulseged H."/>
            <person name="Loveland J.E."/>
            <person name="Lovell J.D."/>
            <person name="Lozado R."/>
            <person name="Lu J."/>
            <person name="Lyne R."/>
            <person name="Ma J."/>
            <person name="Maheshwari M."/>
            <person name="Matthews L.H."/>
            <person name="McDowall J."/>
            <person name="McLaren S."/>
            <person name="McMurray A."/>
            <person name="Meidl P."/>
            <person name="Meitinger T."/>
            <person name="Milne S."/>
            <person name="Miner G."/>
            <person name="Mistry S.L."/>
            <person name="Morgan M."/>
            <person name="Morris S."/>
            <person name="Mueller I."/>
            <person name="Mullikin J.C."/>
            <person name="Nguyen N."/>
            <person name="Nordsiek G."/>
            <person name="Nyakatura G."/>
            <person name="O'dell C.N."/>
            <person name="Okwuonu G."/>
            <person name="Palmer S."/>
            <person name="Pandian R."/>
            <person name="Parker D."/>
            <person name="Parrish J."/>
            <person name="Pasternak S."/>
            <person name="Patel D."/>
            <person name="Pearce A.V."/>
            <person name="Pearson D.M."/>
            <person name="Pelan S.E."/>
            <person name="Perez L."/>
            <person name="Porter K.M."/>
            <person name="Ramsey Y."/>
            <person name="Reichwald K."/>
            <person name="Rhodes S."/>
            <person name="Ridler K.A."/>
            <person name="Schlessinger D."/>
            <person name="Schueler M.G."/>
            <person name="Sehra H.K."/>
            <person name="Shaw-Smith C."/>
            <person name="Shen H."/>
            <person name="Sheridan E.M."/>
            <person name="Shownkeen R."/>
            <person name="Skuce C.D."/>
            <person name="Smith M.L."/>
            <person name="Sotheran E.C."/>
            <person name="Steingruber H.E."/>
            <person name="Steward C.A."/>
            <person name="Storey R."/>
            <person name="Swann R.M."/>
            <person name="Swarbreck D."/>
            <person name="Tabor P.E."/>
            <person name="Taudien S."/>
            <person name="Taylor T."/>
            <person name="Teague B."/>
            <person name="Thomas K."/>
            <person name="Thorpe A."/>
            <person name="Timms K."/>
            <person name="Tracey A."/>
            <person name="Trevanion S."/>
            <person name="Tromans A.C."/>
            <person name="d'Urso M."/>
            <person name="Verduzco D."/>
            <person name="Villasana D."/>
            <person name="Waldron L."/>
            <person name="Wall M."/>
            <person name="Wang Q."/>
            <person name="Warren J."/>
            <person name="Warry G.L."/>
            <person name="Wei X."/>
            <person name="West A."/>
            <person name="Whitehead S.L."/>
            <person name="Whiteley M.N."/>
            <person name="Wilkinson J.E."/>
            <person name="Willey D.L."/>
            <person name="Williams G."/>
            <person name="Williams L."/>
            <person name="Williamson A."/>
            <person name="Williamson H."/>
            <person name="Wilming L."/>
            <person name="Woodmansey R.L."/>
            <person name="Wray P.W."/>
            <person name="Yen J."/>
            <person name="Zhang J."/>
            <person name="Zhou J."/>
            <person name="Zoghbi H."/>
            <person name="Zorilla S."/>
            <person name="Buck D."/>
            <person name="Reinhardt R."/>
            <person name="Poustka A."/>
            <person name="Rosenthal A."/>
            <person name="Lehrach H."/>
            <person name="Meindl A."/>
            <person name="Minx P.J."/>
            <person name="Hillier L.W."/>
            <person name="Willard H.F."/>
            <person name="Wilson R.K."/>
            <person name="Waterston R.H."/>
            <person name="Rice C.M."/>
            <person name="Vaudin M."/>
            <person name="Coulson A."/>
            <person name="Nelson D.L."/>
            <person name="Weinstock G."/>
            <person name="Sulston J.E."/>
            <person name="Durbin R.M."/>
            <person name="Hubbard T."/>
            <person name="Gibbs R.A."/>
            <person name="Beck S."/>
            <person name="Rogers J."/>
            <person name="Bentley D.R."/>
        </authorList>
    </citation>
    <scope>NUCLEOTIDE SEQUENCE [LARGE SCALE GENOMIC DNA]</scope>
</reference>
<reference key="3">
    <citation type="journal article" date="2004" name="Genome Res.">
        <title>The status, quality, and expansion of the NIH full-length cDNA project: the Mammalian Gene Collection (MGC).</title>
        <authorList>
            <consortium name="The MGC Project Team"/>
        </authorList>
    </citation>
    <scope>NUCLEOTIDE SEQUENCE [LARGE SCALE MRNA] (ISOFORMS 1 AND 2)</scope>
</reference>
<reference key="4">
    <citation type="journal article" date="2006" name="Science">
        <title>The consensus coding sequences of human breast and colorectal cancers.</title>
        <authorList>
            <person name="Sjoeblom T."/>
            <person name="Jones S."/>
            <person name="Wood L.D."/>
            <person name="Parsons D.W."/>
            <person name="Lin J."/>
            <person name="Barber T.D."/>
            <person name="Mandelker D."/>
            <person name="Leary R.J."/>
            <person name="Ptak J."/>
            <person name="Silliman N."/>
            <person name="Szabo S."/>
            <person name="Buckhaults P."/>
            <person name="Farrell C."/>
            <person name="Meeh P."/>
            <person name="Markowitz S.D."/>
            <person name="Willis J."/>
            <person name="Dawson D."/>
            <person name="Willson J.K.V."/>
            <person name="Gazdar A.F."/>
            <person name="Hartigan J."/>
            <person name="Wu L."/>
            <person name="Liu C."/>
            <person name="Parmigiani G."/>
            <person name="Park B.H."/>
            <person name="Bachman K.E."/>
            <person name="Papadopoulos N."/>
            <person name="Vogelstein B."/>
            <person name="Kinzler K.W."/>
            <person name="Velculescu V.E."/>
        </authorList>
    </citation>
    <scope>VARIANT [LARGE SCALE ANALYSIS] GLY-122</scope>
</reference>
<keyword id="KW-0025">Alternative splicing</keyword>
<keyword id="KW-0479">Metal-binding</keyword>
<keyword id="KW-1267">Proteomics identification</keyword>
<keyword id="KW-1185">Reference proteome</keyword>
<keyword id="KW-0677">Repeat</keyword>
<keyword id="KW-0802">TPR repeat</keyword>
<keyword id="KW-0862">Zinc</keyword>
<keyword id="KW-0863">Zinc-finger</keyword>
<sequence length="759" mass="84490">MESVRIEQMLSLPAEVSSDNLESAERGASAAQVDMGPHPKVAAEGPAPLPTREPEQEQSPGTSTPESKVLLTQADALASRGRIREALEVYRQLSERQQLVAEQLEQLVRCLAEKVPQGEALAPAPPDEGSTASGTVAAEETGAAAAAAATEVWDGFKCRKCHGFLSDPVSLSCGHTFCKLCLERGRAADRRCALCGVKLSALMVATGRARGARRAGQQPPPPLRVNVVLSGLLGKLFPGPARASQLRHEGNRLYRERQVEAALLKYNEAVKLAPNDHLLYSNRSQIYFTLESHENALHDAEIACKLRPMGFKAHFRKAQALATLGKVEEALREFLYCVSLDGKNKRARCEAQRDNLELPHCSSQEEAAARGDGSSLMDPAKVKGDGQQHHMKDQEEEEEKWDATSPKAASSKTGKCQEKKRKHCQIESQEETGMPNKASKQDPPTDQGDKPALSLPLASFDASDLECALCMRLFYEPVTTPCGHTFCLKCLERCLDHNAKCPLCKDGLSQCLASRKYSKNVIMEELIAKFLPEELKERRKLYEEEMEELSNLNKNVPIFVCTMAYPTVPCPLHIFEPCYRLMIRRCIETGTRQFGMCLGDPVKGFAEYGCILEIRNVQFFADGRSVVDSIGKRRFRVLHQSQRDGYNTADIEYIEDQKVQGEDCAELMGLHNCVYQQASLWFHSLKLSLKNRILNHFGPMPEKDADPQMNPNGPAWCWWMLAVLPLESRAQLPFLAMRSLKDRLNGIRRVLAFISRNQN</sequence>
<comment type="interaction">
    <interactant intactId="EBI-2690768">
        <id>Q496Y0</id>
    </interactant>
    <interactant intactId="EBI-743771">
        <id>Q92624</id>
        <label>APPBP2</label>
    </interactant>
    <organismsDiffer>false</organismsDiffer>
    <experiments>3</experiments>
</comment>
<comment type="interaction">
    <interactant intactId="EBI-2690768">
        <id>Q496Y0</id>
    </interactant>
    <interactant intactId="EBI-1188472">
        <id>P78358</id>
        <label>CTAG1B</label>
    </interactant>
    <organismsDiffer>false</organismsDiffer>
    <experiments>3</experiments>
</comment>
<comment type="interaction">
    <interactant intactId="EBI-2690768">
        <id>Q496Y0</id>
    </interactant>
    <interactant intactId="EBI-3867333">
        <id>A8MQ03</id>
        <label>CYSRT1</label>
    </interactant>
    <organismsDiffer>false</organismsDiffer>
    <experiments>3</experiments>
</comment>
<comment type="interaction">
    <interactant intactId="EBI-2690768">
        <id>Q496Y0</id>
    </interactant>
    <interactant intactId="EBI-1055572">
        <id>P17661</id>
        <label>DES</label>
    </interactant>
    <organismsDiffer>false</organismsDiffer>
    <experiments>3</experiments>
</comment>
<comment type="interaction">
    <interactant intactId="EBI-2690768">
        <id>Q496Y0</id>
    </interactant>
    <interactant intactId="EBI-945833">
        <id>Q7Z3S9</id>
        <label>NOTCH2NLA</label>
    </interactant>
    <organismsDiffer>false</organismsDiffer>
    <experiments>3</experiments>
</comment>
<comment type="interaction">
    <interactant intactId="EBI-2690768">
        <id>Q496Y0</id>
    </interactant>
    <interactant intactId="EBI-354213">
        <id>P35232</id>
        <label>PHB1</label>
    </interactant>
    <organismsDiffer>false</organismsDiffer>
    <experiments>2</experiments>
</comment>
<comment type="interaction">
    <interactant intactId="EBI-2690768">
        <id>Q496Y0</id>
    </interactant>
    <interactant intactId="EBI-355744">
        <id>Q12933</id>
        <label>TRAF2</label>
    </interactant>
    <organismsDiffer>false</organismsDiffer>
    <experiments>3</experiments>
</comment>
<comment type="alternative products">
    <event type="alternative splicing"/>
    <isoform>
        <id>Q496Y0-1</id>
        <name>1</name>
        <sequence type="displayed"/>
    </isoform>
    <isoform>
        <id>Q496Y0-2</id>
        <name>2</name>
        <sequence type="described" ref="VSP_023080"/>
    </isoform>
    <isoform>
        <id>Q496Y0-3</id>
        <name>3</name>
        <sequence type="described" ref="VSP_023081 VSP_023082"/>
    </isoform>
</comment>
<comment type="sequence caution" evidence="7">
    <conflict type="erroneous initiation">
        <sequence resource="EMBL-CDS" id="BAB15419"/>
    </conflict>
</comment>
<feature type="chain" id="PRO_0000277671" description="LON peptidase N-terminal domain and RING finger protein 3">
    <location>
        <begin position="1"/>
        <end position="759"/>
    </location>
</feature>
<feature type="repeat" description="TPR 1">
    <location>
        <begin position="67"/>
        <end position="100"/>
    </location>
</feature>
<feature type="repeat" description="TPR 2">
    <location>
        <begin position="243"/>
        <end position="276"/>
    </location>
</feature>
<feature type="repeat" description="TPR 3">
    <location>
        <begin position="278"/>
        <end position="310"/>
    </location>
</feature>
<feature type="repeat" description="TPR 4">
    <location>
        <begin position="312"/>
        <end position="344"/>
    </location>
</feature>
<feature type="domain" description="Lon N-terminal" evidence="2">
    <location>
        <begin position="546"/>
        <end position="755"/>
    </location>
</feature>
<feature type="zinc finger region" description="RING-type 1" evidence="1">
    <location>
        <begin position="158"/>
        <end position="196"/>
    </location>
</feature>
<feature type="zinc finger region" description="RING-type 2" evidence="1">
    <location>
        <begin position="467"/>
        <end position="505"/>
    </location>
</feature>
<feature type="region of interest" description="Disordered" evidence="3">
    <location>
        <begin position="1"/>
        <end position="69"/>
    </location>
</feature>
<feature type="region of interest" description="Disordered" evidence="3">
    <location>
        <begin position="360"/>
        <end position="454"/>
    </location>
</feature>
<feature type="compositionally biased region" description="Polar residues" evidence="3">
    <location>
        <begin position="57"/>
        <end position="66"/>
    </location>
</feature>
<feature type="compositionally biased region" description="Basic and acidic residues" evidence="3">
    <location>
        <begin position="380"/>
        <end position="393"/>
    </location>
</feature>
<feature type="splice variant" id="VSP_023080" description="In isoform 2." evidence="5 6">
    <location>
        <begin position="313"/>
        <end position="353"/>
    </location>
</feature>
<feature type="splice variant" id="VSP_023081" description="In isoform 3." evidence="5">
    <original>FAEYGC</original>
    <variation>HCLLCN</variation>
    <location>
        <begin position="605"/>
        <end position="610"/>
    </location>
</feature>
<feature type="splice variant" id="VSP_023082" description="In isoform 3." evidence="5">
    <location>
        <begin position="611"/>
        <end position="759"/>
    </location>
</feature>
<feature type="sequence variant" id="VAR_035954" description="In a breast cancer sample; somatic mutation; dbSNP:rs61730253." evidence="4">
    <original>A</original>
    <variation>G</variation>
    <location>
        <position position="122"/>
    </location>
</feature>